<keyword id="KW-0342">GTP-binding</keyword>
<keyword id="KW-0378">Hydrolase</keyword>
<keyword id="KW-0479">Metal-binding</keyword>
<keyword id="KW-0547">Nucleotide-binding</keyword>
<keyword id="KW-0554">One-carbon metabolism</keyword>
<keyword id="KW-0862">Zinc</keyword>
<evidence type="ECO:0000250" key="1"/>
<evidence type="ECO:0000255" key="2">
    <source>
        <dbReference type="HAMAP-Rule" id="MF_00223"/>
    </source>
</evidence>
<accession>Q0TRM0</accession>
<name>GCH1_CLOP1</name>
<sequence length="185" mass="21181">MIDKDKIREGMKLILEAIGEDINREGLIETPDRIARMYEEIFSGIGMNAKEHLSKTFEVHSNDLVLEKDITFYSMCEHHLVPFYGKVHIAYIPNGRVVGLSKLARCVEVYSKKPQLQERLTTEIADSIMEYLDAQGVMVVVEGEHMCMTMRGVRKPGAKTVTTTYRGKFLEDESLKNDVFRMISM</sequence>
<feature type="chain" id="PRO_1000043683" description="GTP cyclohydrolase 1">
    <location>
        <begin position="1"/>
        <end position="185"/>
    </location>
</feature>
<feature type="binding site" evidence="2">
    <location>
        <position position="76"/>
    </location>
    <ligand>
        <name>Zn(2+)</name>
        <dbReference type="ChEBI" id="CHEBI:29105"/>
    </ligand>
</feature>
<feature type="binding site" evidence="2">
    <location>
        <position position="79"/>
    </location>
    <ligand>
        <name>Zn(2+)</name>
        <dbReference type="ChEBI" id="CHEBI:29105"/>
    </ligand>
</feature>
<feature type="binding site" evidence="2">
    <location>
        <position position="147"/>
    </location>
    <ligand>
        <name>Zn(2+)</name>
        <dbReference type="ChEBI" id="CHEBI:29105"/>
    </ligand>
</feature>
<reference key="1">
    <citation type="journal article" date="2006" name="Genome Res.">
        <title>Skewed genomic variability in strains of the toxigenic bacterial pathogen, Clostridium perfringens.</title>
        <authorList>
            <person name="Myers G.S.A."/>
            <person name="Rasko D.A."/>
            <person name="Cheung J.K."/>
            <person name="Ravel J."/>
            <person name="Seshadri R."/>
            <person name="DeBoy R.T."/>
            <person name="Ren Q."/>
            <person name="Varga J."/>
            <person name="Awad M.M."/>
            <person name="Brinkac L.M."/>
            <person name="Daugherty S.C."/>
            <person name="Haft D.H."/>
            <person name="Dodson R.J."/>
            <person name="Madupu R."/>
            <person name="Nelson W.C."/>
            <person name="Rosovitz M.J."/>
            <person name="Sullivan S.A."/>
            <person name="Khouri H."/>
            <person name="Dimitrov G.I."/>
            <person name="Watkins K.L."/>
            <person name="Mulligan S."/>
            <person name="Benton J."/>
            <person name="Radune D."/>
            <person name="Fisher D.J."/>
            <person name="Atkins H.S."/>
            <person name="Hiscox T."/>
            <person name="Jost B.H."/>
            <person name="Billington S.J."/>
            <person name="Songer J.G."/>
            <person name="McClane B.A."/>
            <person name="Titball R.W."/>
            <person name="Rood J.I."/>
            <person name="Melville S.B."/>
            <person name="Paulsen I.T."/>
        </authorList>
    </citation>
    <scope>NUCLEOTIDE SEQUENCE [LARGE SCALE GENOMIC DNA]</scope>
    <source>
        <strain>ATCC 13124 / DSM 756 / JCM 1290 / NCIMB 6125 / NCTC 8237 / S 107 / Type A</strain>
    </source>
</reference>
<comment type="catalytic activity">
    <reaction evidence="2">
        <text>GTP + H2O = 7,8-dihydroneopterin 3'-triphosphate + formate + H(+)</text>
        <dbReference type="Rhea" id="RHEA:17473"/>
        <dbReference type="ChEBI" id="CHEBI:15377"/>
        <dbReference type="ChEBI" id="CHEBI:15378"/>
        <dbReference type="ChEBI" id="CHEBI:15740"/>
        <dbReference type="ChEBI" id="CHEBI:37565"/>
        <dbReference type="ChEBI" id="CHEBI:58462"/>
        <dbReference type="EC" id="3.5.4.16"/>
    </reaction>
</comment>
<comment type="pathway">
    <text evidence="2">Cofactor biosynthesis; 7,8-dihydroneopterin triphosphate biosynthesis; 7,8-dihydroneopterin triphosphate from GTP: step 1/1.</text>
</comment>
<comment type="subunit">
    <text evidence="1">Toroid-shaped homodecamer, composed of two pentamers of five dimers.</text>
</comment>
<comment type="similarity">
    <text evidence="2">Belongs to the GTP cyclohydrolase I family.</text>
</comment>
<proteinExistence type="inferred from homology"/>
<organism>
    <name type="scientific">Clostridium perfringens (strain ATCC 13124 / DSM 756 / JCM 1290 / NCIMB 6125 / NCTC 8237 / Type A)</name>
    <dbReference type="NCBI Taxonomy" id="195103"/>
    <lineage>
        <taxon>Bacteria</taxon>
        <taxon>Bacillati</taxon>
        <taxon>Bacillota</taxon>
        <taxon>Clostridia</taxon>
        <taxon>Eubacteriales</taxon>
        <taxon>Clostridiaceae</taxon>
        <taxon>Clostridium</taxon>
    </lineage>
</organism>
<gene>
    <name evidence="2" type="primary">folE</name>
    <name type="ordered locus">CPF_1274</name>
</gene>
<dbReference type="EC" id="3.5.4.16" evidence="2"/>
<dbReference type="EMBL" id="CP000246">
    <property type="protein sequence ID" value="ABG84686.1"/>
    <property type="molecule type" value="Genomic_DNA"/>
</dbReference>
<dbReference type="RefSeq" id="WP_011590644.1">
    <property type="nucleotide sequence ID" value="NC_008261.1"/>
</dbReference>
<dbReference type="SMR" id="Q0TRM0"/>
<dbReference type="STRING" id="195103.CPF_1274"/>
<dbReference type="PaxDb" id="195103-CPF_1274"/>
<dbReference type="KEGG" id="cpf:CPF_1274"/>
<dbReference type="eggNOG" id="COG0302">
    <property type="taxonomic scope" value="Bacteria"/>
</dbReference>
<dbReference type="HOGENOM" id="CLU_049768_3_3_9"/>
<dbReference type="UniPathway" id="UPA00848">
    <property type="reaction ID" value="UER00151"/>
</dbReference>
<dbReference type="Proteomes" id="UP000001823">
    <property type="component" value="Chromosome"/>
</dbReference>
<dbReference type="GO" id="GO:0005737">
    <property type="term" value="C:cytoplasm"/>
    <property type="evidence" value="ECO:0007669"/>
    <property type="project" value="TreeGrafter"/>
</dbReference>
<dbReference type="GO" id="GO:0005525">
    <property type="term" value="F:GTP binding"/>
    <property type="evidence" value="ECO:0007669"/>
    <property type="project" value="UniProtKB-KW"/>
</dbReference>
<dbReference type="GO" id="GO:0003934">
    <property type="term" value="F:GTP cyclohydrolase I activity"/>
    <property type="evidence" value="ECO:0007669"/>
    <property type="project" value="UniProtKB-UniRule"/>
</dbReference>
<dbReference type="GO" id="GO:0008270">
    <property type="term" value="F:zinc ion binding"/>
    <property type="evidence" value="ECO:0007669"/>
    <property type="project" value="UniProtKB-UniRule"/>
</dbReference>
<dbReference type="GO" id="GO:0006730">
    <property type="term" value="P:one-carbon metabolic process"/>
    <property type="evidence" value="ECO:0007669"/>
    <property type="project" value="UniProtKB-UniRule"/>
</dbReference>
<dbReference type="GO" id="GO:0006729">
    <property type="term" value="P:tetrahydrobiopterin biosynthetic process"/>
    <property type="evidence" value="ECO:0007669"/>
    <property type="project" value="TreeGrafter"/>
</dbReference>
<dbReference type="GO" id="GO:0046654">
    <property type="term" value="P:tetrahydrofolate biosynthetic process"/>
    <property type="evidence" value="ECO:0007669"/>
    <property type="project" value="UniProtKB-UniRule"/>
</dbReference>
<dbReference type="FunFam" id="1.10.286.10:FF:000001">
    <property type="entry name" value="GTP cyclohydrolase 1"/>
    <property type="match status" value="1"/>
</dbReference>
<dbReference type="FunFam" id="3.30.1130.10:FF:000001">
    <property type="entry name" value="GTP cyclohydrolase 1"/>
    <property type="match status" value="1"/>
</dbReference>
<dbReference type="Gene3D" id="1.10.286.10">
    <property type="match status" value="1"/>
</dbReference>
<dbReference type="Gene3D" id="3.30.1130.10">
    <property type="match status" value="1"/>
</dbReference>
<dbReference type="HAMAP" id="MF_00223">
    <property type="entry name" value="FolE"/>
    <property type="match status" value="1"/>
</dbReference>
<dbReference type="InterPro" id="IPR043133">
    <property type="entry name" value="GTP-CH-I_C/QueF"/>
</dbReference>
<dbReference type="InterPro" id="IPR043134">
    <property type="entry name" value="GTP-CH-I_N"/>
</dbReference>
<dbReference type="InterPro" id="IPR001474">
    <property type="entry name" value="GTP_CycHdrlase_I"/>
</dbReference>
<dbReference type="InterPro" id="IPR018234">
    <property type="entry name" value="GTP_CycHdrlase_I_CS"/>
</dbReference>
<dbReference type="InterPro" id="IPR020602">
    <property type="entry name" value="GTP_CycHdrlase_I_dom"/>
</dbReference>
<dbReference type="NCBIfam" id="TIGR00063">
    <property type="entry name" value="folE"/>
    <property type="match status" value="1"/>
</dbReference>
<dbReference type="NCBIfam" id="NF006825">
    <property type="entry name" value="PRK09347.1-2"/>
    <property type="match status" value="1"/>
</dbReference>
<dbReference type="NCBIfam" id="NF006826">
    <property type="entry name" value="PRK09347.1-3"/>
    <property type="match status" value="1"/>
</dbReference>
<dbReference type="PANTHER" id="PTHR11109:SF7">
    <property type="entry name" value="GTP CYCLOHYDROLASE 1"/>
    <property type="match status" value="1"/>
</dbReference>
<dbReference type="PANTHER" id="PTHR11109">
    <property type="entry name" value="GTP CYCLOHYDROLASE I"/>
    <property type="match status" value="1"/>
</dbReference>
<dbReference type="Pfam" id="PF01227">
    <property type="entry name" value="GTP_cyclohydroI"/>
    <property type="match status" value="1"/>
</dbReference>
<dbReference type="SUPFAM" id="SSF55620">
    <property type="entry name" value="Tetrahydrobiopterin biosynthesis enzymes-like"/>
    <property type="match status" value="1"/>
</dbReference>
<dbReference type="PROSITE" id="PS00859">
    <property type="entry name" value="GTP_CYCLOHYDROL_1_1"/>
    <property type="match status" value="1"/>
</dbReference>
<dbReference type="PROSITE" id="PS00860">
    <property type="entry name" value="GTP_CYCLOHYDROL_1_2"/>
    <property type="match status" value="1"/>
</dbReference>
<protein>
    <recommendedName>
        <fullName evidence="2">GTP cyclohydrolase 1</fullName>
        <ecNumber evidence="2">3.5.4.16</ecNumber>
    </recommendedName>
    <alternativeName>
        <fullName evidence="2">GTP cyclohydrolase I</fullName>
        <shortName evidence="2">GTP-CH-I</shortName>
    </alternativeName>
</protein>